<proteinExistence type="evidence at protein level"/>
<gene>
    <name type="primary">ilvE</name>
    <name type="ordered locus">PA5013</name>
</gene>
<accession>O86428</accession>
<organism>
    <name type="scientific">Pseudomonas aeruginosa (strain ATCC 15692 / DSM 22644 / CIP 104116 / JCM 14847 / LMG 12228 / 1C / PRS 101 / PAO1)</name>
    <dbReference type="NCBI Taxonomy" id="208964"/>
    <lineage>
        <taxon>Bacteria</taxon>
        <taxon>Pseudomonadati</taxon>
        <taxon>Pseudomonadota</taxon>
        <taxon>Gammaproteobacteria</taxon>
        <taxon>Pseudomonadales</taxon>
        <taxon>Pseudomonadaceae</taxon>
        <taxon>Pseudomonas</taxon>
    </lineage>
</organism>
<protein>
    <recommendedName>
        <fullName>Branched-chain-amino-acid aminotransferase</fullName>
        <shortName>BCAT</shortName>
        <ecNumber>2.6.1.42</ecNumber>
    </recommendedName>
</protein>
<comment type="function">
    <text evidence="1">Acts on leucine, isoleucine and valine.</text>
</comment>
<comment type="catalytic activity">
    <reaction>
        <text>L-leucine + 2-oxoglutarate = 4-methyl-2-oxopentanoate + L-glutamate</text>
        <dbReference type="Rhea" id="RHEA:18321"/>
        <dbReference type="ChEBI" id="CHEBI:16810"/>
        <dbReference type="ChEBI" id="CHEBI:17865"/>
        <dbReference type="ChEBI" id="CHEBI:29985"/>
        <dbReference type="ChEBI" id="CHEBI:57427"/>
        <dbReference type="EC" id="2.6.1.42"/>
    </reaction>
</comment>
<comment type="catalytic activity">
    <reaction>
        <text>L-isoleucine + 2-oxoglutarate = (S)-3-methyl-2-oxopentanoate + L-glutamate</text>
        <dbReference type="Rhea" id="RHEA:24801"/>
        <dbReference type="ChEBI" id="CHEBI:16810"/>
        <dbReference type="ChEBI" id="CHEBI:29985"/>
        <dbReference type="ChEBI" id="CHEBI:35146"/>
        <dbReference type="ChEBI" id="CHEBI:58045"/>
        <dbReference type="EC" id="2.6.1.42"/>
    </reaction>
</comment>
<comment type="catalytic activity">
    <reaction>
        <text>L-valine + 2-oxoglutarate = 3-methyl-2-oxobutanoate + L-glutamate</text>
        <dbReference type="Rhea" id="RHEA:24813"/>
        <dbReference type="ChEBI" id="CHEBI:11851"/>
        <dbReference type="ChEBI" id="CHEBI:16810"/>
        <dbReference type="ChEBI" id="CHEBI:29985"/>
        <dbReference type="ChEBI" id="CHEBI:57762"/>
        <dbReference type="EC" id="2.6.1.42"/>
    </reaction>
</comment>
<comment type="cofactor">
    <cofactor>
        <name>pyridoxal 5'-phosphate</name>
        <dbReference type="ChEBI" id="CHEBI:597326"/>
    </cofactor>
</comment>
<comment type="pathway">
    <text>Amino-acid biosynthesis; L-isoleucine biosynthesis; L-isoleucine from 2-oxobutanoate: step 4/4.</text>
</comment>
<comment type="pathway">
    <text>Amino-acid biosynthesis; L-leucine biosynthesis; L-leucine from 3-methyl-2-oxobutanoate: step 4/4.</text>
</comment>
<comment type="pathway">
    <text>Amino-acid biosynthesis; L-valine biosynthesis; L-valine from pyruvate: step 4/4.</text>
</comment>
<comment type="similarity">
    <text evidence="2">Belongs to the class-IV pyridoxal-phosphate-dependent aminotransferase family.</text>
</comment>
<feature type="chain" id="PRO_0000103270" description="Branched-chain-amino-acid aminotransferase">
    <location>
        <begin position="1"/>
        <end position="307"/>
    </location>
</feature>
<feature type="modified residue" description="N6-(pyridoxal phosphate)lysine" evidence="1">
    <location>
        <position position="160"/>
    </location>
</feature>
<feature type="sequence conflict" description="In Ref. 1; AAC33172." evidence="2" ref="1">
    <original>RAAVRENNLESAYIRPMVFY</original>
    <variation>APPCARTTWKAPISARWCST</variation>
    <location>
        <begin position="85"/>
        <end position="104"/>
    </location>
</feature>
<feature type="sequence conflict" description="In Ref. 1; AAC33172." evidence="2" ref="1">
    <original>A</original>
    <variation>S</variation>
    <location>
        <position position="124"/>
    </location>
</feature>
<feature type="strand" evidence="3">
    <location>
        <begin position="3"/>
        <end position="5"/>
    </location>
</feature>
<feature type="strand" evidence="3">
    <location>
        <begin position="7"/>
        <end position="12"/>
    </location>
</feature>
<feature type="strand" evidence="3">
    <location>
        <begin position="15"/>
        <end position="18"/>
    </location>
</feature>
<feature type="helix" evidence="3">
    <location>
        <begin position="19"/>
        <end position="21"/>
    </location>
</feature>
<feature type="strand" evidence="3">
    <location>
        <begin position="23"/>
        <end position="25"/>
    </location>
</feature>
<feature type="helix" evidence="3">
    <location>
        <begin position="29"/>
        <end position="33"/>
    </location>
</feature>
<feature type="strand" evidence="3">
    <location>
        <begin position="36"/>
        <end position="38"/>
    </location>
</feature>
<feature type="strand" evidence="3">
    <location>
        <begin position="41"/>
        <end position="46"/>
    </location>
</feature>
<feature type="strand" evidence="3">
    <location>
        <begin position="49"/>
        <end position="54"/>
    </location>
</feature>
<feature type="helix" evidence="3">
    <location>
        <begin position="55"/>
        <end position="68"/>
    </location>
</feature>
<feature type="helix" evidence="3">
    <location>
        <begin position="77"/>
        <end position="89"/>
    </location>
</feature>
<feature type="turn" evidence="3">
    <location>
        <begin position="90"/>
        <end position="92"/>
    </location>
</feature>
<feature type="strand" evidence="3">
    <location>
        <begin position="94"/>
        <end position="104"/>
    </location>
</feature>
<feature type="strand" evidence="3">
    <location>
        <begin position="118"/>
        <end position="126"/>
    </location>
</feature>
<feature type="helix" evidence="3">
    <location>
        <begin position="134"/>
        <end position="138"/>
    </location>
</feature>
<feature type="strand" evidence="3">
    <location>
        <begin position="140"/>
        <end position="148"/>
    </location>
</feature>
<feature type="turn" evidence="3">
    <location>
        <begin position="152"/>
        <end position="154"/>
    </location>
</feature>
<feature type="helix" evidence="3">
    <location>
        <begin position="163"/>
        <end position="165"/>
    </location>
</feature>
<feature type="helix" evidence="3">
    <location>
        <begin position="166"/>
        <end position="177"/>
    </location>
</feature>
<feature type="strand" evidence="3">
    <location>
        <begin position="181"/>
        <end position="186"/>
    </location>
</feature>
<feature type="strand" evidence="3">
    <location>
        <begin position="192"/>
        <end position="204"/>
    </location>
</feature>
<feature type="strand" evidence="3">
    <location>
        <begin position="207"/>
        <end position="210"/>
    </location>
</feature>
<feature type="strand" evidence="3">
    <location>
        <begin position="213"/>
        <end position="216"/>
    </location>
</feature>
<feature type="helix" evidence="3">
    <location>
        <begin position="220"/>
        <end position="231"/>
    </location>
</feature>
<feature type="strand" evidence="3">
    <location>
        <begin position="235"/>
        <end position="238"/>
    </location>
</feature>
<feature type="helix" evidence="3">
    <location>
        <begin position="243"/>
        <end position="247"/>
    </location>
</feature>
<feature type="strand" evidence="3">
    <location>
        <begin position="250"/>
        <end position="256"/>
    </location>
</feature>
<feature type="turn" evidence="3">
    <location>
        <begin position="257"/>
        <end position="259"/>
    </location>
</feature>
<feature type="strand" evidence="3">
    <location>
        <begin position="260"/>
        <end position="267"/>
    </location>
</feature>
<feature type="helix" evidence="3">
    <location>
        <begin position="279"/>
        <end position="292"/>
    </location>
</feature>
<feature type="helix" evidence="3">
    <location>
        <begin position="300"/>
        <end position="302"/>
    </location>
</feature>
<feature type="strand" evidence="3">
    <location>
        <begin position="303"/>
        <end position="305"/>
    </location>
</feature>
<dbReference type="EC" id="2.6.1.42"/>
<dbReference type="EMBL" id="U63816">
    <property type="protein sequence ID" value="AAC33172.1"/>
    <property type="molecule type" value="Genomic_DNA"/>
</dbReference>
<dbReference type="EMBL" id="AE004091">
    <property type="protein sequence ID" value="AAG08398.1"/>
    <property type="molecule type" value="Genomic_DNA"/>
</dbReference>
<dbReference type="PIR" id="A83021">
    <property type="entry name" value="A83021"/>
</dbReference>
<dbReference type="RefSeq" id="NP_253700.1">
    <property type="nucleotide sequence ID" value="NC_002516.2"/>
</dbReference>
<dbReference type="RefSeq" id="WP_003095783.1">
    <property type="nucleotide sequence ID" value="NZ_QZGE01000002.1"/>
</dbReference>
<dbReference type="PDB" id="6NST">
    <property type="method" value="X-ray"/>
    <property type="resolution" value="2.14 A"/>
    <property type="chains" value="A/B/C/D/E/F=1-307"/>
</dbReference>
<dbReference type="PDBsum" id="6NST"/>
<dbReference type="SMR" id="O86428"/>
<dbReference type="FunCoup" id="O86428">
    <property type="interactions" value="587"/>
</dbReference>
<dbReference type="STRING" id="208964.PA5013"/>
<dbReference type="PaxDb" id="208964-PA5013"/>
<dbReference type="GeneID" id="881423"/>
<dbReference type="KEGG" id="pae:PA5013"/>
<dbReference type="PATRIC" id="fig|208964.12.peg.5253"/>
<dbReference type="PseudoCAP" id="PA5013"/>
<dbReference type="HOGENOM" id="CLU_020844_3_1_6"/>
<dbReference type="InParanoid" id="O86428"/>
<dbReference type="OrthoDB" id="21319at2"/>
<dbReference type="PhylomeDB" id="O86428"/>
<dbReference type="BioCyc" id="MetaCyc:MONOMER-11691"/>
<dbReference type="BioCyc" id="PAER208964:G1FZ6-5129-MONOMER"/>
<dbReference type="BRENDA" id="2.6.1.42">
    <property type="organism ID" value="5087"/>
</dbReference>
<dbReference type="UniPathway" id="UPA00047">
    <property type="reaction ID" value="UER00058"/>
</dbReference>
<dbReference type="UniPathway" id="UPA00048">
    <property type="reaction ID" value="UER00073"/>
</dbReference>
<dbReference type="UniPathway" id="UPA00049">
    <property type="reaction ID" value="UER00062"/>
</dbReference>
<dbReference type="Proteomes" id="UP000002438">
    <property type="component" value="Chromosome"/>
</dbReference>
<dbReference type="GO" id="GO:0005829">
    <property type="term" value="C:cytosol"/>
    <property type="evidence" value="ECO:0000318"/>
    <property type="project" value="GO_Central"/>
</dbReference>
<dbReference type="GO" id="GO:0004084">
    <property type="term" value="F:branched-chain-amino-acid transaminase activity"/>
    <property type="evidence" value="ECO:0000318"/>
    <property type="project" value="GO_Central"/>
</dbReference>
<dbReference type="GO" id="GO:0052656">
    <property type="term" value="F:L-isoleucine-2-oxoglutarate transaminase activity"/>
    <property type="evidence" value="ECO:0007669"/>
    <property type="project" value="RHEA"/>
</dbReference>
<dbReference type="GO" id="GO:0052654">
    <property type="term" value="F:L-leucine-2-oxoglutarate transaminase activity"/>
    <property type="evidence" value="ECO:0007669"/>
    <property type="project" value="RHEA"/>
</dbReference>
<dbReference type="GO" id="GO:0052655">
    <property type="term" value="F:L-valine-2-oxoglutarate transaminase activity"/>
    <property type="evidence" value="ECO:0007669"/>
    <property type="project" value="RHEA"/>
</dbReference>
<dbReference type="GO" id="GO:0006532">
    <property type="term" value="P:aspartate biosynthetic process"/>
    <property type="evidence" value="ECO:0000318"/>
    <property type="project" value="GO_Central"/>
</dbReference>
<dbReference type="GO" id="GO:0009097">
    <property type="term" value="P:isoleucine biosynthetic process"/>
    <property type="evidence" value="ECO:0007669"/>
    <property type="project" value="UniProtKB-UniPathway"/>
</dbReference>
<dbReference type="GO" id="GO:0009098">
    <property type="term" value="P:L-leucine biosynthetic process"/>
    <property type="evidence" value="ECO:0000318"/>
    <property type="project" value="GO_Central"/>
</dbReference>
<dbReference type="GO" id="GO:0009099">
    <property type="term" value="P:L-valine biosynthetic process"/>
    <property type="evidence" value="ECO:0000318"/>
    <property type="project" value="GO_Central"/>
</dbReference>
<dbReference type="CDD" id="cd01557">
    <property type="entry name" value="BCAT_beta_family"/>
    <property type="match status" value="1"/>
</dbReference>
<dbReference type="FunFam" id="3.20.10.10:FF:000001">
    <property type="entry name" value="Branched-chain-amino-acid aminotransferase"/>
    <property type="match status" value="1"/>
</dbReference>
<dbReference type="FunFam" id="3.30.470.10:FF:000001">
    <property type="entry name" value="Branched-chain-amino-acid aminotransferase"/>
    <property type="match status" value="1"/>
</dbReference>
<dbReference type="Gene3D" id="3.30.470.10">
    <property type="match status" value="1"/>
</dbReference>
<dbReference type="Gene3D" id="3.20.10.10">
    <property type="entry name" value="D-amino Acid Aminotransferase, subunit A, domain 2"/>
    <property type="match status" value="1"/>
</dbReference>
<dbReference type="InterPro" id="IPR001544">
    <property type="entry name" value="Aminotrans_IV"/>
</dbReference>
<dbReference type="InterPro" id="IPR018300">
    <property type="entry name" value="Aminotrans_IV_CS"/>
</dbReference>
<dbReference type="InterPro" id="IPR036038">
    <property type="entry name" value="Aminotransferase-like"/>
</dbReference>
<dbReference type="InterPro" id="IPR005785">
    <property type="entry name" value="B_amino_transI"/>
</dbReference>
<dbReference type="InterPro" id="IPR043132">
    <property type="entry name" value="BCAT-like_C"/>
</dbReference>
<dbReference type="InterPro" id="IPR043131">
    <property type="entry name" value="BCAT-like_N"/>
</dbReference>
<dbReference type="InterPro" id="IPR033939">
    <property type="entry name" value="BCAT_family"/>
</dbReference>
<dbReference type="InterPro" id="IPR050571">
    <property type="entry name" value="Class-IV_PLP-Dep_Aminotrnsfr"/>
</dbReference>
<dbReference type="NCBIfam" id="TIGR01122">
    <property type="entry name" value="ilvE_I"/>
    <property type="match status" value="1"/>
</dbReference>
<dbReference type="NCBIfam" id="NF005146">
    <property type="entry name" value="PRK06606.1"/>
    <property type="match status" value="1"/>
</dbReference>
<dbReference type="PANTHER" id="PTHR42743">
    <property type="entry name" value="AMINO-ACID AMINOTRANSFERASE"/>
    <property type="match status" value="1"/>
</dbReference>
<dbReference type="PANTHER" id="PTHR42743:SF11">
    <property type="entry name" value="AMINODEOXYCHORISMATE LYASE"/>
    <property type="match status" value="1"/>
</dbReference>
<dbReference type="Pfam" id="PF01063">
    <property type="entry name" value="Aminotran_4"/>
    <property type="match status" value="1"/>
</dbReference>
<dbReference type="SUPFAM" id="SSF56752">
    <property type="entry name" value="D-aminoacid aminotransferase-like PLP-dependent enzymes"/>
    <property type="match status" value="1"/>
</dbReference>
<dbReference type="PROSITE" id="PS00770">
    <property type="entry name" value="AA_TRANSFER_CLASS_4"/>
    <property type="match status" value="1"/>
</dbReference>
<evidence type="ECO:0000250" key="1"/>
<evidence type="ECO:0000305" key="2"/>
<evidence type="ECO:0007829" key="3">
    <source>
        <dbReference type="PDB" id="6NST"/>
    </source>
</evidence>
<keyword id="KW-0002">3D-structure</keyword>
<keyword id="KW-0028">Amino-acid biosynthesis</keyword>
<keyword id="KW-0032">Aminotransferase</keyword>
<keyword id="KW-0100">Branched-chain amino acid biosynthesis</keyword>
<keyword id="KW-0903">Direct protein sequencing</keyword>
<keyword id="KW-0663">Pyridoxal phosphate</keyword>
<keyword id="KW-1185">Reference proteome</keyword>
<keyword id="KW-0808">Transferase</keyword>
<sequence length="307" mass="34085">MSMADRDGVIWYDGELVQWRDATTHVLTHTLHYGMGVFEGVRAYDTPQGTAIFRLQAHTDRLFDSAHIMNMQIPYSRDEINEATRAAVRENNLESAYIRPMVFYGSEGMGLRASGLKVHVIIAAWSWGAYMGEEALQQGIKVRTSSFTRHHVNISMTRAKSNGAYINSMLALQEAISGGADEAMMLDPEGYVAEGSGENIFIIKDGVIYTPEVTACLNGITRNTILTLAAEHGFKLVEKRITRDEVYIADEAFFTGTAAEVTPIREVDGRKIGAGRRGPVTEKLQKAYFDLVSGKTEAHAEWRTLVK</sequence>
<name>ILVE_PSEAE</name>
<reference key="1">
    <citation type="submission" date="1998-08" db="EMBL/GenBank/DDBJ databases">
        <title>Clustering of the lipopolysaccharide core genes, waaF, waaC, waaG, and waaP, in Pseudomonas aeruginosa.</title>
        <authorList>
            <person name="Franklund C.V."/>
            <person name="Coyne M.J. Jr."/>
            <person name="Goldberg J.B."/>
        </authorList>
    </citation>
    <scope>NUCLEOTIDE SEQUENCE [GENOMIC DNA]</scope>
    <source>
        <strain>PAK</strain>
    </source>
</reference>
<reference key="2">
    <citation type="journal article" date="2000" name="Nature">
        <title>Complete genome sequence of Pseudomonas aeruginosa PAO1, an opportunistic pathogen.</title>
        <authorList>
            <person name="Stover C.K."/>
            <person name="Pham X.-Q.T."/>
            <person name="Erwin A.L."/>
            <person name="Mizoguchi S.D."/>
            <person name="Warrener P."/>
            <person name="Hickey M.J."/>
            <person name="Brinkman F.S.L."/>
            <person name="Hufnagle W.O."/>
            <person name="Kowalik D.J."/>
            <person name="Lagrou M."/>
            <person name="Garber R.L."/>
            <person name="Goltry L."/>
            <person name="Tolentino E."/>
            <person name="Westbrock-Wadman S."/>
            <person name="Yuan Y."/>
            <person name="Brody L.L."/>
            <person name="Coulter S.N."/>
            <person name="Folger K.R."/>
            <person name="Kas A."/>
            <person name="Larbig K."/>
            <person name="Lim R.M."/>
            <person name="Smith K.A."/>
            <person name="Spencer D.H."/>
            <person name="Wong G.K.-S."/>
            <person name="Wu Z."/>
            <person name="Paulsen I.T."/>
            <person name="Reizer J."/>
            <person name="Saier M.H. Jr."/>
            <person name="Hancock R.E.W."/>
            <person name="Lory S."/>
            <person name="Olson M.V."/>
        </authorList>
    </citation>
    <scope>NUCLEOTIDE SEQUENCE [LARGE SCALE GENOMIC DNA]</scope>
    <source>
        <strain>ATCC 15692 / DSM 22644 / CIP 104116 / JCM 14847 / LMG 12228 / 1C / PRS 101 / PAO1</strain>
    </source>
</reference>
<reference key="3">
    <citation type="thesis" date="2005" institute="Ben-Gurion University" country="Israel">
        <title>Biofouling in water treatment systems: effect of membrane properties on biofilm formation.</title>
        <authorList>
            <person name="Liddor M."/>
        </authorList>
    </citation>
    <scope>PROTEIN SEQUENCE OF 244-265</scope>
    <source>
        <strain>ATCC 33467 / type 1 smooth</strain>
        <strain>ATCC 33468 / type 2 mucoid</strain>
    </source>
</reference>